<reference key="1">
    <citation type="journal article" date="2004" name="Biochem. Biophys. Res. Commun.">
        <title>Identification and characterization of a lymphocytic Rho-GTPase effector: rhotekin-2.</title>
        <authorList>
            <person name="Collier F.M."/>
            <person name="Gregorio-King C.C."/>
            <person name="Gough T.J."/>
            <person name="Talbot C.D."/>
            <person name="Walder K."/>
            <person name="Kirkland M.A."/>
        </authorList>
    </citation>
    <scope>NUCLEOTIDE SEQUENCE [MRNA] (ISOFORM 1)</scope>
    <scope>TISSUE SPECIFICITY</scope>
    <scope>FUNCTION</scope>
    <scope>ALTERNATIVE SPLICING</scope>
    <scope>INDUCTION BY PHA</scope>
</reference>
<reference key="2">
    <citation type="journal article" date="2004" name="J. Steroid Biochem. Mol. Biol.">
        <title>Mechanisms of resistance to the cytotoxic effects of oxysterols in human leukemic cells.</title>
        <authorList>
            <person name="Gregorio-King C.C."/>
            <person name="Gough T."/>
            <person name="Van Der Meer G.J."/>
            <person name="Hosking J.B."/>
            <person name="Waugh C.M."/>
            <person name="McLeod J.L."/>
            <person name="Collier F.M."/>
            <person name="Kirkland M.A."/>
        </authorList>
    </citation>
    <scope>NUCLEOTIDE SEQUENCE [MRNA] (ISOFORM 1)</scope>
    <scope>INDUCTION</scope>
</reference>
<reference key="3">
    <citation type="journal article" date="2004" name="Nature">
        <title>The DNA sequence and comparative analysis of human chromosome 10.</title>
        <authorList>
            <person name="Deloukas P."/>
            <person name="Earthrowl M.E."/>
            <person name="Grafham D.V."/>
            <person name="Rubenfield M."/>
            <person name="French L."/>
            <person name="Steward C.A."/>
            <person name="Sims S.K."/>
            <person name="Jones M.C."/>
            <person name="Searle S."/>
            <person name="Scott C."/>
            <person name="Howe K."/>
            <person name="Hunt S.E."/>
            <person name="Andrews T.D."/>
            <person name="Gilbert J.G.R."/>
            <person name="Swarbreck D."/>
            <person name="Ashurst J.L."/>
            <person name="Taylor A."/>
            <person name="Battles J."/>
            <person name="Bird C.P."/>
            <person name="Ainscough R."/>
            <person name="Almeida J.P."/>
            <person name="Ashwell R.I.S."/>
            <person name="Ambrose K.D."/>
            <person name="Babbage A.K."/>
            <person name="Bagguley C.L."/>
            <person name="Bailey J."/>
            <person name="Banerjee R."/>
            <person name="Bates K."/>
            <person name="Beasley H."/>
            <person name="Bray-Allen S."/>
            <person name="Brown A.J."/>
            <person name="Brown J.Y."/>
            <person name="Burford D.C."/>
            <person name="Burrill W."/>
            <person name="Burton J."/>
            <person name="Cahill P."/>
            <person name="Camire D."/>
            <person name="Carter N.P."/>
            <person name="Chapman J.C."/>
            <person name="Clark S.Y."/>
            <person name="Clarke G."/>
            <person name="Clee C.M."/>
            <person name="Clegg S."/>
            <person name="Corby N."/>
            <person name="Coulson A."/>
            <person name="Dhami P."/>
            <person name="Dutta I."/>
            <person name="Dunn M."/>
            <person name="Faulkner L."/>
            <person name="Frankish A."/>
            <person name="Frankland J.A."/>
            <person name="Garner P."/>
            <person name="Garnett J."/>
            <person name="Gribble S."/>
            <person name="Griffiths C."/>
            <person name="Grocock R."/>
            <person name="Gustafson E."/>
            <person name="Hammond S."/>
            <person name="Harley J.L."/>
            <person name="Hart E."/>
            <person name="Heath P.D."/>
            <person name="Ho T.P."/>
            <person name="Hopkins B."/>
            <person name="Horne J."/>
            <person name="Howden P.J."/>
            <person name="Huckle E."/>
            <person name="Hynds C."/>
            <person name="Johnson C."/>
            <person name="Johnson D."/>
            <person name="Kana A."/>
            <person name="Kay M."/>
            <person name="Kimberley A.M."/>
            <person name="Kershaw J.K."/>
            <person name="Kokkinaki M."/>
            <person name="Laird G.K."/>
            <person name="Lawlor S."/>
            <person name="Lee H.M."/>
            <person name="Leongamornlert D.A."/>
            <person name="Laird G."/>
            <person name="Lloyd C."/>
            <person name="Lloyd D.M."/>
            <person name="Loveland J."/>
            <person name="Lovell J."/>
            <person name="McLaren S."/>
            <person name="McLay K.E."/>
            <person name="McMurray A."/>
            <person name="Mashreghi-Mohammadi M."/>
            <person name="Matthews L."/>
            <person name="Milne S."/>
            <person name="Nickerson T."/>
            <person name="Nguyen M."/>
            <person name="Overton-Larty E."/>
            <person name="Palmer S.A."/>
            <person name="Pearce A.V."/>
            <person name="Peck A.I."/>
            <person name="Pelan S."/>
            <person name="Phillimore B."/>
            <person name="Porter K."/>
            <person name="Rice C.M."/>
            <person name="Rogosin A."/>
            <person name="Ross M.T."/>
            <person name="Sarafidou T."/>
            <person name="Sehra H.K."/>
            <person name="Shownkeen R."/>
            <person name="Skuce C.D."/>
            <person name="Smith M."/>
            <person name="Standring L."/>
            <person name="Sycamore N."/>
            <person name="Tester J."/>
            <person name="Thorpe A."/>
            <person name="Torcasso W."/>
            <person name="Tracey A."/>
            <person name="Tromans A."/>
            <person name="Tsolas J."/>
            <person name="Wall M."/>
            <person name="Walsh J."/>
            <person name="Wang H."/>
            <person name="Weinstock K."/>
            <person name="West A.P."/>
            <person name="Willey D.L."/>
            <person name="Whitehead S.L."/>
            <person name="Wilming L."/>
            <person name="Wray P.W."/>
            <person name="Young L."/>
            <person name="Chen Y."/>
            <person name="Lovering R.C."/>
            <person name="Moschonas N.K."/>
            <person name="Siebert R."/>
            <person name="Fechtel K."/>
            <person name="Bentley D."/>
            <person name="Durbin R.M."/>
            <person name="Hubbard T."/>
            <person name="Doucette-Stamm L."/>
            <person name="Beck S."/>
            <person name="Smith D.R."/>
            <person name="Rogers J."/>
        </authorList>
    </citation>
    <scope>NUCLEOTIDE SEQUENCE [LARGE SCALE GENOMIC DNA]</scope>
</reference>
<reference key="4">
    <citation type="submission" date="2005-07" db="EMBL/GenBank/DDBJ databases">
        <authorList>
            <person name="Mural R.J."/>
            <person name="Istrail S."/>
            <person name="Sutton G.G."/>
            <person name="Florea L."/>
            <person name="Halpern A.L."/>
            <person name="Mobarry C.M."/>
            <person name="Lippert R."/>
            <person name="Walenz B."/>
            <person name="Shatkay H."/>
            <person name="Dew I."/>
            <person name="Miller J.R."/>
            <person name="Flanigan M.J."/>
            <person name="Edwards N.J."/>
            <person name="Bolanos R."/>
            <person name="Fasulo D."/>
            <person name="Halldorsson B.V."/>
            <person name="Hannenhalli S."/>
            <person name="Turner R."/>
            <person name="Yooseph S."/>
            <person name="Lu F."/>
            <person name="Nusskern D.R."/>
            <person name="Shue B.C."/>
            <person name="Zheng X.H."/>
            <person name="Zhong F."/>
            <person name="Delcher A.L."/>
            <person name="Huson D.H."/>
            <person name="Kravitz S.A."/>
            <person name="Mouchard L."/>
            <person name="Reinert K."/>
            <person name="Remington K.A."/>
            <person name="Clark A.G."/>
            <person name="Waterman M.S."/>
            <person name="Eichler E.E."/>
            <person name="Adams M.D."/>
            <person name="Hunkapiller M.W."/>
            <person name="Myers E.W."/>
            <person name="Venter J.C."/>
        </authorList>
    </citation>
    <scope>NUCLEOTIDE SEQUENCE [LARGE SCALE GENOMIC DNA]</scope>
</reference>
<reference key="5">
    <citation type="journal article" date="2004" name="Genome Res.">
        <title>The status, quality, and expansion of the NIH full-length cDNA project: the Mammalian Gene Collection (MGC).</title>
        <authorList>
            <consortium name="The MGC Project Team"/>
        </authorList>
    </citation>
    <scope>NUCLEOTIDE SEQUENCE [LARGE SCALE MRNA] (ISOFORM 3)</scope>
    <scope>NUCLEOTIDE SEQUENCE [LARGE SCALE MRNA] OF 341-609 (ISOFORM 1)</scope>
    <scope>VARIANT ARG-462</scope>
    <source>
        <tissue>Lung</tissue>
        <tissue>Testis</tissue>
    </source>
</reference>
<reference key="6">
    <citation type="journal article" date="2004" name="Nat. Genet.">
        <title>Complete sequencing and characterization of 21,243 full-length human cDNAs.</title>
        <authorList>
            <person name="Ota T."/>
            <person name="Suzuki Y."/>
            <person name="Nishikawa T."/>
            <person name="Otsuki T."/>
            <person name="Sugiyama T."/>
            <person name="Irie R."/>
            <person name="Wakamatsu A."/>
            <person name="Hayashi K."/>
            <person name="Sato H."/>
            <person name="Nagai K."/>
            <person name="Kimura K."/>
            <person name="Makita H."/>
            <person name="Sekine M."/>
            <person name="Obayashi M."/>
            <person name="Nishi T."/>
            <person name="Shibahara T."/>
            <person name="Tanaka T."/>
            <person name="Ishii S."/>
            <person name="Yamamoto J."/>
            <person name="Saito K."/>
            <person name="Kawai Y."/>
            <person name="Isono Y."/>
            <person name="Nakamura Y."/>
            <person name="Nagahari K."/>
            <person name="Murakami K."/>
            <person name="Yasuda T."/>
            <person name="Iwayanagi T."/>
            <person name="Wagatsuma M."/>
            <person name="Shiratori A."/>
            <person name="Sudo H."/>
            <person name="Hosoiri T."/>
            <person name="Kaku Y."/>
            <person name="Kodaira H."/>
            <person name="Kondo H."/>
            <person name="Sugawara M."/>
            <person name="Takahashi M."/>
            <person name="Kanda K."/>
            <person name="Yokoi T."/>
            <person name="Furuya T."/>
            <person name="Kikkawa E."/>
            <person name="Omura Y."/>
            <person name="Abe K."/>
            <person name="Kamihara K."/>
            <person name="Katsuta N."/>
            <person name="Sato K."/>
            <person name="Tanikawa M."/>
            <person name="Yamazaki M."/>
            <person name="Ninomiya K."/>
            <person name="Ishibashi T."/>
            <person name="Yamashita H."/>
            <person name="Murakawa K."/>
            <person name="Fujimori K."/>
            <person name="Tanai H."/>
            <person name="Kimata M."/>
            <person name="Watanabe M."/>
            <person name="Hiraoka S."/>
            <person name="Chiba Y."/>
            <person name="Ishida S."/>
            <person name="Ono Y."/>
            <person name="Takiguchi S."/>
            <person name="Watanabe S."/>
            <person name="Yosida M."/>
            <person name="Hotuta T."/>
            <person name="Kusano J."/>
            <person name="Kanehori K."/>
            <person name="Takahashi-Fujii A."/>
            <person name="Hara H."/>
            <person name="Tanase T.-O."/>
            <person name="Nomura Y."/>
            <person name="Togiya S."/>
            <person name="Komai F."/>
            <person name="Hara R."/>
            <person name="Takeuchi K."/>
            <person name="Arita M."/>
            <person name="Imose N."/>
            <person name="Musashino K."/>
            <person name="Yuuki H."/>
            <person name="Oshima A."/>
            <person name="Sasaki N."/>
            <person name="Aotsuka S."/>
            <person name="Yoshikawa Y."/>
            <person name="Matsunawa H."/>
            <person name="Ichihara T."/>
            <person name="Shiohata N."/>
            <person name="Sano S."/>
            <person name="Moriya S."/>
            <person name="Momiyama H."/>
            <person name="Satoh N."/>
            <person name="Takami S."/>
            <person name="Terashima Y."/>
            <person name="Suzuki O."/>
            <person name="Nakagawa S."/>
            <person name="Senoh A."/>
            <person name="Mizoguchi H."/>
            <person name="Goto Y."/>
            <person name="Shimizu F."/>
            <person name="Wakebe H."/>
            <person name="Hishigaki H."/>
            <person name="Watanabe T."/>
            <person name="Sugiyama A."/>
            <person name="Takemoto M."/>
            <person name="Kawakami B."/>
            <person name="Yamazaki M."/>
            <person name="Watanabe K."/>
            <person name="Kumagai A."/>
            <person name="Itakura S."/>
            <person name="Fukuzumi Y."/>
            <person name="Fujimori Y."/>
            <person name="Komiyama M."/>
            <person name="Tashiro H."/>
            <person name="Tanigami A."/>
            <person name="Fujiwara T."/>
            <person name="Ono T."/>
            <person name="Yamada K."/>
            <person name="Fujii Y."/>
            <person name="Ozaki K."/>
            <person name="Hirao M."/>
            <person name="Ohmori Y."/>
            <person name="Kawabata A."/>
            <person name="Hikiji T."/>
            <person name="Kobatake N."/>
            <person name="Inagaki H."/>
            <person name="Ikema Y."/>
            <person name="Okamoto S."/>
            <person name="Okitani R."/>
            <person name="Kawakami T."/>
            <person name="Noguchi S."/>
            <person name="Itoh T."/>
            <person name="Shigeta K."/>
            <person name="Senba T."/>
            <person name="Matsumura K."/>
            <person name="Nakajima Y."/>
            <person name="Mizuno T."/>
            <person name="Morinaga M."/>
            <person name="Sasaki M."/>
            <person name="Togashi T."/>
            <person name="Oyama M."/>
            <person name="Hata H."/>
            <person name="Watanabe M."/>
            <person name="Komatsu T."/>
            <person name="Mizushima-Sugano J."/>
            <person name="Satoh T."/>
            <person name="Shirai Y."/>
            <person name="Takahashi Y."/>
            <person name="Nakagawa K."/>
            <person name="Okumura K."/>
            <person name="Nagase T."/>
            <person name="Nomura N."/>
            <person name="Kikuchi H."/>
            <person name="Masuho Y."/>
            <person name="Yamashita R."/>
            <person name="Nakai K."/>
            <person name="Yada T."/>
            <person name="Nakamura Y."/>
            <person name="Ohara O."/>
            <person name="Isogai T."/>
            <person name="Sugano S."/>
        </authorList>
    </citation>
    <scope>NUCLEOTIDE SEQUENCE [LARGE SCALE MRNA] OF 212-609 (ISOFORM 2)</scope>
    <scope>VARIANT ARG-462</scope>
</reference>
<reference key="7">
    <citation type="journal article" date="2007" name="BMC Genomics">
        <title>The full-ORF clone resource of the German cDNA consortium.</title>
        <authorList>
            <person name="Bechtel S."/>
            <person name="Rosenfelder H."/>
            <person name="Duda A."/>
            <person name="Schmidt C.P."/>
            <person name="Ernst U."/>
            <person name="Wellenreuther R."/>
            <person name="Mehrle A."/>
            <person name="Schuster C."/>
            <person name="Bahr A."/>
            <person name="Bloecker H."/>
            <person name="Heubner D."/>
            <person name="Hoerlein A."/>
            <person name="Michel G."/>
            <person name="Wedler H."/>
            <person name="Koehrer K."/>
            <person name="Ottenwaelder B."/>
            <person name="Poustka A."/>
            <person name="Wiemann S."/>
            <person name="Schupp I."/>
        </authorList>
    </citation>
    <scope>NUCLEOTIDE SEQUENCE [LARGE SCALE MRNA] OF 535-609 (ISOFORM 1)</scope>
    <source>
        <tissue>Fetal kidney</tissue>
    </source>
</reference>
<name>RTKN2_HUMAN</name>
<comment type="function">
    <text evidence="8">May play an important role in lymphopoiesis.</text>
</comment>
<comment type="alternative products">
    <event type="alternative splicing"/>
    <isoform>
        <id>Q8IZC4-1</id>
        <name>1</name>
        <sequence type="displayed"/>
    </isoform>
    <isoform>
        <id>Q8IZC4-2</id>
        <name>2</name>
        <sequence type="described" ref="VSP_029137 VSP_029138 VSP_029139"/>
    </isoform>
    <isoform>
        <id>Q8IZC4-3</id>
        <name>3</name>
        <sequence type="described" ref="VSP_029135 VSP_029136"/>
    </isoform>
</comment>
<comment type="tissue specificity">
    <text evidence="8">Expressed in lymphocytes, CD4 positive T-cells and bone marrow-derived cells. Also expressed in lung, colon, thymus and brain.</text>
</comment>
<comment type="induction">
    <text evidence="6 8">Up-regulated in cells resistant to 25-hydroxy cholesterol (25-OHC). Down-regulated in lymphocytes activated by treatment with phytohemagglutinin (PHA).</text>
</comment>
<comment type="sequence caution" evidence="11">
    <conflict type="erroneous initiation">
        <sequence resource="EMBL-CDS" id="BAC04837"/>
    </conflict>
</comment>
<comment type="sequence caution" evidence="11">
    <conflict type="miscellaneous discrepancy">
        <sequence resource="EMBL" id="BC048002"/>
    </conflict>
    <text>Intron retention.</text>
</comment>
<gene>
    <name type="primary">RTKN2</name>
    <name type="synonym">PLEKHK1</name>
</gene>
<keyword id="KW-0025">Alternative splicing</keyword>
<keyword id="KW-0175">Coiled coil</keyword>
<keyword id="KW-1267">Proteomics identification</keyword>
<keyword id="KW-1185">Reference proteome</keyword>
<dbReference type="EMBL" id="AY150309">
    <property type="protein sequence ID" value="AAN71738.1"/>
    <property type="molecule type" value="mRNA"/>
</dbReference>
<dbReference type="EMBL" id="AC024597">
    <property type="status" value="NOT_ANNOTATED_CDS"/>
    <property type="molecule type" value="Genomic_DNA"/>
</dbReference>
<dbReference type="EMBL" id="AL607150">
    <property type="status" value="NOT_ANNOTATED_CDS"/>
    <property type="molecule type" value="Genomic_DNA"/>
</dbReference>
<dbReference type="EMBL" id="CH471083">
    <property type="protein sequence ID" value="EAW54232.1"/>
    <property type="molecule type" value="Genomic_DNA"/>
</dbReference>
<dbReference type="EMBL" id="BC025765">
    <property type="protein sequence ID" value="AAH25765.1"/>
    <property type="molecule type" value="mRNA"/>
</dbReference>
<dbReference type="EMBL" id="BC048002">
    <property type="status" value="NOT_ANNOTATED_CDS"/>
    <property type="molecule type" value="mRNA"/>
</dbReference>
<dbReference type="EMBL" id="BC141821">
    <property type="protein sequence ID" value="AAI41822.1"/>
    <property type="molecule type" value="mRNA"/>
</dbReference>
<dbReference type="EMBL" id="BC142725">
    <property type="protein sequence ID" value="AAI42726.1"/>
    <property type="molecule type" value="mRNA"/>
</dbReference>
<dbReference type="EMBL" id="AK096671">
    <property type="protein sequence ID" value="BAC04837.1"/>
    <property type="status" value="ALT_INIT"/>
    <property type="molecule type" value="mRNA"/>
</dbReference>
<dbReference type="EMBL" id="CR749217">
    <property type="protein sequence ID" value="CAH18074.1"/>
    <property type="molecule type" value="mRNA"/>
</dbReference>
<dbReference type="CCDS" id="CCDS7263.1">
    <molecule id="Q8IZC4-1"/>
</dbReference>
<dbReference type="CCDS" id="CCDS73140.1">
    <molecule id="Q8IZC4-3"/>
</dbReference>
<dbReference type="RefSeq" id="NP_001269870.1">
    <molecule id="Q8IZC4-3"/>
    <property type="nucleotide sequence ID" value="NM_001282941.2"/>
</dbReference>
<dbReference type="RefSeq" id="NP_660350.2">
    <molecule id="Q8IZC4-1"/>
    <property type="nucleotide sequence ID" value="NM_145307.3"/>
</dbReference>
<dbReference type="SMR" id="Q8IZC4"/>
<dbReference type="BioGRID" id="128576">
    <property type="interactions" value="10"/>
</dbReference>
<dbReference type="FunCoup" id="Q8IZC4">
    <property type="interactions" value="2582"/>
</dbReference>
<dbReference type="IntAct" id="Q8IZC4">
    <property type="interactions" value="7"/>
</dbReference>
<dbReference type="MINT" id="Q8IZC4"/>
<dbReference type="STRING" id="9606.ENSP00000362894"/>
<dbReference type="GlyGen" id="Q8IZC4">
    <property type="glycosylation" value="3 sites, 1 O-linked glycan (3 sites)"/>
</dbReference>
<dbReference type="iPTMnet" id="Q8IZC4"/>
<dbReference type="PhosphoSitePlus" id="Q8IZC4"/>
<dbReference type="BioMuta" id="RTKN2"/>
<dbReference type="DMDM" id="74750788"/>
<dbReference type="jPOST" id="Q8IZC4"/>
<dbReference type="MassIVE" id="Q8IZC4"/>
<dbReference type="PaxDb" id="9606-ENSP00000362894"/>
<dbReference type="PeptideAtlas" id="Q8IZC4"/>
<dbReference type="ProteomicsDB" id="71313">
    <molecule id="Q8IZC4-1"/>
</dbReference>
<dbReference type="ProteomicsDB" id="71314">
    <molecule id="Q8IZC4-2"/>
</dbReference>
<dbReference type="ProteomicsDB" id="71315">
    <molecule id="Q8IZC4-3"/>
</dbReference>
<dbReference type="Pumba" id="Q8IZC4"/>
<dbReference type="Antibodypedia" id="28261">
    <property type="antibodies" value="138 antibodies from 24 providers"/>
</dbReference>
<dbReference type="DNASU" id="219790"/>
<dbReference type="Ensembl" id="ENST00000373789.8">
    <molecule id="Q8IZC4-1"/>
    <property type="protein sequence ID" value="ENSP00000362894.3"/>
    <property type="gene ID" value="ENSG00000182010.11"/>
</dbReference>
<dbReference type="Ensembl" id="ENST00000395260.3">
    <molecule id="Q8IZC4-3"/>
    <property type="protein sequence ID" value="ENSP00000378678.3"/>
    <property type="gene ID" value="ENSG00000182010.11"/>
</dbReference>
<dbReference type="GeneID" id="219790"/>
<dbReference type="KEGG" id="hsa:219790"/>
<dbReference type="MANE-Select" id="ENST00000373789.8">
    <property type="protein sequence ID" value="ENSP00000362894.3"/>
    <property type="RefSeq nucleotide sequence ID" value="NM_145307.4"/>
    <property type="RefSeq protein sequence ID" value="NP_660350.2"/>
</dbReference>
<dbReference type="UCSC" id="uc001jlw.5">
    <molecule id="Q8IZC4-1"/>
    <property type="organism name" value="human"/>
</dbReference>
<dbReference type="AGR" id="HGNC:19364"/>
<dbReference type="CTD" id="219790"/>
<dbReference type="DisGeNET" id="219790"/>
<dbReference type="GeneCards" id="RTKN2"/>
<dbReference type="HGNC" id="HGNC:19364">
    <property type="gene designation" value="RTKN2"/>
</dbReference>
<dbReference type="HPA" id="ENSG00000182010">
    <property type="expression patterns" value="Tissue enriched (lung)"/>
</dbReference>
<dbReference type="MIM" id="618450">
    <property type="type" value="gene"/>
</dbReference>
<dbReference type="neXtProt" id="NX_Q8IZC4"/>
<dbReference type="OpenTargets" id="ENSG00000182010"/>
<dbReference type="PharmGKB" id="PA162402276"/>
<dbReference type="VEuPathDB" id="HostDB:ENSG00000182010"/>
<dbReference type="eggNOG" id="ENOG502QRWR">
    <property type="taxonomic scope" value="Eukaryota"/>
</dbReference>
<dbReference type="GeneTree" id="ENSGT00940000157470"/>
<dbReference type="HOGENOM" id="CLU_025066_1_0_1"/>
<dbReference type="InParanoid" id="Q8IZC4"/>
<dbReference type="OMA" id="GNHKMVI"/>
<dbReference type="OrthoDB" id="5817051at2759"/>
<dbReference type="PAN-GO" id="Q8IZC4">
    <property type="GO annotations" value="2 GO annotations based on evolutionary models"/>
</dbReference>
<dbReference type="PhylomeDB" id="Q8IZC4"/>
<dbReference type="TreeFam" id="TF331476"/>
<dbReference type="PathwayCommons" id="Q8IZC4"/>
<dbReference type="SignaLink" id="Q8IZC4"/>
<dbReference type="BioGRID-ORCS" id="219790">
    <property type="hits" value="32 hits in 1146 CRISPR screens"/>
</dbReference>
<dbReference type="ChiTaRS" id="RTKN2">
    <property type="organism name" value="human"/>
</dbReference>
<dbReference type="GenomeRNAi" id="219790"/>
<dbReference type="Pharos" id="Q8IZC4">
    <property type="development level" value="Tbio"/>
</dbReference>
<dbReference type="PRO" id="PR:Q8IZC4"/>
<dbReference type="Proteomes" id="UP000005640">
    <property type="component" value="Chromosome 10"/>
</dbReference>
<dbReference type="RNAct" id="Q8IZC4">
    <property type="molecule type" value="protein"/>
</dbReference>
<dbReference type="Bgee" id="ENSG00000182010">
    <property type="expression patterns" value="Expressed in right lung and 114 other cell types or tissues"/>
</dbReference>
<dbReference type="ExpressionAtlas" id="Q8IZC4">
    <property type="expression patterns" value="baseline and differential"/>
</dbReference>
<dbReference type="GO" id="GO:0005737">
    <property type="term" value="C:cytoplasm"/>
    <property type="evidence" value="ECO:0000314"/>
    <property type="project" value="UniProtKB"/>
</dbReference>
<dbReference type="GO" id="GO:0005634">
    <property type="term" value="C:nucleus"/>
    <property type="evidence" value="ECO:0000314"/>
    <property type="project" value="UniProtKB"/>
</dbReference>
<dbReference type="GO" id="GO:0005886">
    <property type="term" value="C:plasma membrane"/>
    <property type="evidence" value="ECO:0007669"/>
    <property type="project" value="Ensembl"/>
</dbReference>
<dbReference type="GO" id="GO:0030097">
    <property type="term" value="P:hemopoiesis"/>
    <property type="evidence" value="ECO:0000318"/>
    <property type="project" value="GO_Central"/>
</dbReference>
<dbReference type="GO" id="GO:2001243">
    <property type="term" value="P:negative regulation of intrinsic apoptotic signaling pathway"/>
    <property type="evidence" value="ECO:0000315"/>
    <property type="project" value="UniProtKB"/>
</dbReference>
<dbReference type="GO" id="GO:0008284">
    <property type="term" value="P:positive regulation of cell population proliferation"/>
    <property type="evidence" value="ECO:0000318"/>
    <property type="project" value="GO_Central"/>
</dbReference>
<dbReference type="GO" id="GO:0051092">
    <property type="term" value="P:positive regulation of NF-kappaB transcription factor activity"/>
    <property type="evidence" value="ECO:0000315"/>
    <property type="project" value="UniProtKB"/>
</dbReference>
<dbReference type="GO" id="GO:1901224">
    <property type="term" value="P:positive regulation of non-canonical NF-kappaB signal transduction"/>
    <property type="evidence" value="ECO:0000315"/>
    <property type="project" value="UniProtKB"/>
</dbReference>
<dbReference type="GO" id="GO:0007165">
    <property type="term" value="P:signal transduction"/>
    <property type="evidence" value="ECO:0007669"/>
    <property type="project" value="InterPro"/>
</dbReference>
<dbReference type="CDD" id="cd13249">
    <property type="entry name" value="PH_rhotekin2"/>
    <property type="match status" value="1"/>
</dbReference>
<dbReference type="FunFam" id="2.30.29.30:FF:000274">
    <property type="entry name" value="Rhotekin 2"/>
    <property type="match status" value="1"/>
</dbReference>
<dbReference type="Gene3D" id="2.30.29.30">
    <property type="entry name" value="Pleckstrin-homology domain (PH domain)/Phosphotyrosine-binding domain (PTB)"/>
    <property type="match status" value="1"/>
</dbReference>
<dbReference type="InterPro" id="IPR012966">
    <property type="entry name" value="AHD"/>
</dbReference>
<dbReference type="InterPro" id="IPR051364">
    <property type="entry name" value="Cytokinesis/Rho-signaling"/>
</dbReference>
<dbReference type="InterPro" id="IPR011072">
    <property type="entry name" value="HR1_rho-bd"/>
</dbReference>
<dbReference type="InterPro" id="IPR011993">
    <property type="entry name" value="PH-like_dom_sf"/>
</dbReference>
<dbReference type="InterPro" id="IPR001849">
    <property type="entry name" value="PH_domain"/>
</dbReference>
<dbReference type="PANTHER" id="PTHR21538">
    <property type="entry name" value="ANILLIN/RHOTEKIN RTKN"/>
    <property type="match status" value="1"/>
</dbReference>
<dbReference type="PANTHER" id="PTHR21538:SF21">
    <property type="entry name" value="RHOTEKIN-2"/>
    <property type="match status" value="1"/>
</dbReference>
<dbReference type="Pfam" id="PF08174">
    <property type="entry name" value="Anillin"/>
    <property type="match status" value="1"/>
</dbReference>
<dbReference type="Pfam" id="PF00169">
    <property type="entry name" value="PH"/>
    <property type="match status" value="1"/>
</dbReference>
<dbReference type="SMART" id="SM00742">
    <property type="entry name" value="Hr1"/>
    <property type="match status" value="1"/>
</dbReference>
<dbReference type="SMART" id="SM00233">
    <property type="entry name" value="PH"/>
    <property type="match status" value="1"/>
</dbReference>
<dbReference type="SUPFAM" id="SSF50729">
    <property type="entry name" value="PH domain-like"/>
    <property type="match status" value="1"/>
</dbReference>
<dbReference type="PROSITE" id="PS50003">
    <property type="entry name" value="PH_DOMAIN"/>
    <property type="match status" value="1"/>
</dbReference>
<dbReference type="PROSITE" id="PS51860">
    <property type="entry name" value="REM_1"/>
    <property type="match status" value="1"/>
</dbReference>
<proteinExistence type="evidence at protein level"/>
<protein>
    <recommendedName>
        <fullName>Rhotekin-2</fullName>
    </recommendedName>
    <alternativeName>
        <fullName>Pleckstrin homology domain-containing family K member 1</fullName>
        <shortName>PH domain-containing family K member 1</shortName>
    </alternativeName>
</protein>
<evidence type="ECO:0000255" key="1"/>
<evidence type="ECO:0000255" key="2">
    <source>
        <dbReference type="PROSITE-ProRule" id="PRU00145"/>
    </source>
</evidence>
<evidence type="ECO:0000255" key="3">
    <source>
        <dbReference type="PROSITE-ProRule" id="PRU01207"/>
    </source>
</evidence>
<evidence type="ECO:0000256" key="4">
    <source>
        <dbReference type="SAM" id="MobiDB-lite"/>
    </source>
</evidence>
<evidence type="ECO:0000269" key="5">
    <source>
    </source>
</evidence>
<evidence type="ECO:0000269" key="6">
    <source>
    </source>
</evidence>
<evidence type="ECO:0000269" key="7">
    <source>
    </source>
</evidence>
<evidence type="ECO:0000269" key="8">
    <source>
    </source>
</evidence>
<evidence type="ECO:0000303" key="9">
    <source>
    </source>
</evidence>
<evidence type="ECO:0000303" key="10">
    <source>
    </source>
</evidence>
<evidence type="ECO:0000305" key="11"/>
<accession>Q8IZC4</accession>
<accession>Q3ZCR1</accession>
<accession>Q68DZ6</accession>
<accession>Q8N8K1</accession>
<accession>Q8TAV2</accession>
<organism>
    <name type="scientific">Homo sapiens</name>
    <name type="common">Human</name>
    <dbReference type="NCBI Taxonomy" id="9606"/>
    <lineage>
        <taxon>Eukaryota</taxon>
        <taxon>Metazoa</taxon>
        <taxon>Chordata</taxon>
        <taxon>Craniata</taxon>
        <taxon>Vertebrata</taxon>
        <taxon>Euteleostomi</taxon>
        <taxon>Mammalia</taxon>
        <taxon>Eutheria</taxon>
        <taxon>Euarchontoglires</taxon>
        <taxon>Primates</taxon>
        <taxon>Haplorrhini</taxon>
        <taxon>Catarrhini</taxon>
        <taxon>Hominidae</taxon>
        <taxon>Homo</taxon>
    </lineage>
</organism>
<feature type="chain" id="PRO_0000309326" description="Rhotekin-2">
    <location>
        <begin position="1"/>
        <end position="609"/>
    </location>
</feature>
<feature type="domain" description="REM-1" evidence="3">
    <location>
        <begin position="5"/>
        <end position="81"/>
    </location>
</feature>
<feature type="domain" description="PH" evidence="2">
    <location>
        <begin position="286"/>
        <end position="393"/>
    </location>
</feature>
<feature type="region of interest" description="Disordered" evidence="4">
    <location>
        <begin position="495"/>
        <end position="520"/>
    </location>
</feature>
<feature type="region of interest" description="Disordered" evidence="4">
    <location>
        <begin position="554"/>
        <end position="609"/>
    </location>
</feature>
<feature type="coiled-coil region" evidence="1">
    <location>
        <begin position="56"/>
        <end position="91"/>
    </location>
</feature>
<feature type="compositionally biased region" description="Basic and acidic residues" evidence="4">
    <location>
        <begin position="569"/>
        <end position="582"/>
    </location>
</feature>
<feature type="splice variant" id="VSP_029135" description="In isoform 3." evidence="10">
    <original>F</original>
    <variation>L</variation>
    <location>
        <position position="163"/>
    </location>
</feature>
<feature type="splice variant" id="VSP_029136" description="In isoform 3." evidence="10">
    <location>
        <begin position="164"/>
        <end position="609"/>
    </location>
</feature>
<feature type="splice variant" id="VSP_029137" description="In isoform 2." evidence="9">
    <original>K</original>
    <variation>KSLVLFEDSLEGIQLAISQSFK</variation>
    <location>
        <position position="340"/>
    </location>
</feature>
<feature type="splice variant" id="VSP_029138" description="In isoform 2." evidence="9">
    <original>VLYPASEPLHDEKGKKRQAPL</original>
    <variation>NNSNQLHNLQKLPATSKFLFT</variation>
    <location>
        <begin position="486"/>
        <end position="506"/>
    </location>
</feature>
<feature type="splice variant" id="VSP_029139" description="In isoform 2." evidence="9">
    <location>
        <begin position="507"/>
        <end position="609"/>
    </location>
</feature>
<feature type="sequence variant" id="VAR_050516" description="In dbSNP:rs3765004.">
    <original>K</original>
    <variation>T</variation>
    <location>
        <position position="101"/>
    </location>
</feature>
<feature type="sequence variant" id="VAR_050517" description="In dbSNP:rs3125734." evidence="5 7">
    <original>H</original>
    <variation>R</variation>
    <location>
        <position position="462"/>
    </location>
</feature>
<sequence>MEGPSLRGPALRLAGLPTQQDCNIQEKIDLEIRMREGIWKLLSLSTQKDQVLHAVKNLMVCNARLMAYTSELQKLEEQIANQTGRCDVKFESKERTACKGKIAISDIRIPLMWKDSDHFSNKERSRRYAIFCLFKMGANVFDTDVVNVDKTITDICFENVTIFNEAGPDFQIKVEVYSCCTEESSITNTPKKLAKKLKTSISKATGKKISSVLQEEDDEMCLLLSSAVFGVKYNLLAHTTLTLESAEDSFKTHNLSINGNEESSFWLPLYGNMCCRLVAQPACMAEDAFAGFLNQQQMVEGLISWRRLYCVLRGGKLYCFYSPEEIEAKVEPALVVPINKETRIRAMDKDAKKRIHNFSVINPVPGQAITQIFAVDNREDLQKWMEAFWQHFFDLSQWKHCCEELMKIEIMSPRKPPLFLTKEATSVYHDMSIDSPMKLESLTDIIQKKIEETNGQFLIGQHEESLPPPWATLFDGNHQMVIQKKVLYPASEPLHDEKGKKRQAPLPPSDKLPFSLKSQSNTDQLVKDNWGKTSVSQTSSLDTKLSTLMHHLQKPMAAPRKLLPARRNRLSDGEHTDTKTNFEAKPVPAPRQKSIKDILDPRSWLQAQV</sequence>